<gene>
    <name type="primary">AP1S3</name>
</gene>
<comment type="function">
    <text evidence="1">Subunit of clathrin-associated adaptor protein complex 1 that plays a role in protein sorting in the late-Golgi/trans-Golgi network (TGN) and/or endosomes. The AP complexes mediate both the recruitment of clathrin to membranes and the recognition of sorting signals within the cytosolic tails of transmembrane cargo molecules. Involved in TLR3 trafficking (PubMed:24791904).</text>
</comment>
<comment type="subunit">
    <text>Adaptor protein complex 1 (AP-1) is a heterotetramer composed of two large adaptins (gamma-type subunit AP1G1 and beta-type subunit AP1B1), a medium adaptin (mu-type subunit AP1M1 or AP1M2) and a small adaptin (sigma-type subunit AP1S1 or AP1S2 or AP1S3).</text>
</comment>
<comment type="interaction">
    <interactant intactId="EBI-3923129">
        <id>Q96PC3</id>
    </interactant>
    <interactant intactId="EBI-719906">
        <id>Q6PD74</id>
        <label>AAGAB</label>
    </interactant>
    <organismsDiffer>false</organismsDiffer>
    <experiments>6</experiments>
</comment>
<comment type="interaction">
    <interactant intactId="EBI-12780485">
        <id>Q96PC3-2</id>
    </interactant>
    <interactant intactId="EBI-719906">
        <id>Q6PD74</id>
        <label>AAGAB</label>
    </interactant>
    <organismsDiffer>false</organismsDiffer>
    <experiments>3</experiments>
</comment>
<comment type="subcellular location">
    <subcellularLocation>
        <location>Golgi apparatus</location>
    </subcellularLocation>
    <subcellularLocation>
        <location>Cytoplasmic vesicle membrane</location>
        <topology>Peripheral membrane protein</topology>
        <orientation>Cytoplasmic side</orientation>
    </subcellularLocation>
    <subcellularLocation>
        <location>Membrane</location>
        <location>Clathrin-coated pit</location>
    </subcellularLocation>
    <text>Component of the coat surrounding the cytoplasmic face of coated vesicles located at the Golgi complex.</text>
</comment>
<comment type="alternative products">
    <event type="alternative splicing"/>
    <isoform>
        <id>Q96PC3-1</id>
        <name>1</name>
        <sequence type="displayed"/>
    </isoform>
    <isoform>
        <id>Q96PC3-2</id>
        <name>2</name>
        <sequence type="described" ref="VSP_015944"/>
    </isoform>
    <isoform>
        <id>Q96PC3-4</id>
        <name>4</name>
        <sequence type="described" ref="VSP_040384"/>
    </isoform>
    <isoform>
        <id>Q96PC3-3</id>
        <name>3</name>
        <sequence type="described" ref="VSP_015942 VSP_015943"/>
    </isoform>
</comment>
<comment type="tissue specificity">
    <text>Widely expressed.</text>
</comment>
<comment type="disease" evidence="1">
    <disease id="DI-04277">
        <name>Psoriasis 15, pustular</name>
        <acronym>PSORS15</acronym>
        <description>A form of pustular psoriasis, a life-threatening disease defined by repeated flares of sudden onset consisting of diffuse erythematous skin eruption characterized by rapid coverage with pustules, high-grade fever, asthenia, marked leukocytosis, and elevated serum levels of C-reactive protein.</description>
        <dbReference type="MIM" id="616106"/>
    </disease>
    <text>Disease susceptibility is associated with variants affecting the gene represented in this entry.</text>
</comment>
<comment type="miscellaneous">
    <molecule>Isoform 2</molecule>
    <text evidence="4">May be produced at very low levels due to a premature stop codon in the mRNA, leading to nonsense-mediated mRNA decay.</text>
</comment>
<comment type="miscellaneous">
    <molecule>Isoform 3</molecule>
    <text evidence="4">May be produced at very low levels due to a premature stop codon in the mRNA, leading to nonsense-mediated mRNA decay.</text>
</comment>
<comment type="similarity">
    <text evidence="4">Belongs to the adaptor complexes small subunit family.</text>
</comment>
<accession>Q96PC3</accession>
<accession>B4DQZ1</accession>
<accession>Q8WTY1</accession>
<accession>Q96DD1</accession>
<name>AP1S3_HUMAN</name>
<sequence length="154" mass="18280">MIHFILLFSRQGKLRLQKWYITLPDKERKKITREIVQIILSRGHRTSSFVDWKELKLVYKRYASLYFCCAIENQDNELLTLEIVHRYVELLDKYFGNVCELDIIFNFEKAYFILDEFIIGGEIQETSKKIAVKAIEDSDMLQEVSTVSQTMGER</sequence>
<keyword id="KW-0002">3D-structure</keyword>
<keyword id="KW-0025">Alternative splicing</keyword>
<keyword id="KW-0168">Coated pit</keyword>
<keyword id="KW-0968">Cytoplasmic vesicle</keyword>
<keyword id="KW-0225">Disease variant</keyword>
<keyword id="KW-0333">Golgi apparatus</keyword>
<keyword id="KW-0472">Membrane</keyword>
<keyword id="KW-0653">Protein transport</keyword>
<keyword id="KW-1267">Proteomics identification</keyword>
<keyword id="KW-1185">Reference proteome</keyword>
<keyword id="KW-0813">Transport</keyword>
<reference key="1">
    <citation type="journal article" date="2001" name="Mol. Biol. Cell">
        <title>Adaptins: the final recount.</title>
        <authorList>
            <person name="Boehm M."/>
            <person name="Bonifacino J.S."/>
        </authorList>
    </citation>
    <scope>NUCLEOTIDE SEQUENCE [MRNA] (ISOFORM 1)</scope>
</reference>
<reference key="2">
    <citation type="journal article" date="2004" name="Nat. Genet.">
        <title>Complete sequencing and characterization of 21,243 full-length human cDNAs.</title>
        <authorList>
            <person name="Ota T."/>
            <person name="Suzuki Y."/>
            <person name="Nishikawa T."/>
            <person name="Otsuki T."/>
            <person name="Sugiyama T."/>
            <person name="Irie R."/>
            <person name="Wakamatsu A."/>
            <person name="Hayashi K."/>
            <person name="Sato H."/>
            <person name="Nagai K."/>
            <person name="Kimura K."/>
            <person name="Makita H."/>
            <person name="Sekine M."/>
            <person name="Obayashi M."/>
            <person name="Nishi T."/>
            <person name="Shibahara T."/>
            <person name="Tanaka T."/>
            <person name="Ishii S."/>
            <person name="Yamamoto J."/>
            <person name="Saito K."/>
            <person name="Kawai Y."/>
            <person name="Isono Y."/>
            <person name="Nakamura Y."/>
            <person name="Nagahari K."/>
            <person name="Murakami K."/>
            <person name="Yasuda T."/>
            <person name="Iwayanagi T."/>
            <person name="Wagatsuma M."/>
            <person name="Shiratori A."/>
            <person name="Sudo H."/>
            <person name="Hosoiri T."/>
            <person name="Kaku Y."/>
            <person name="Kodaira H."/>
            <person name="Kondo H."/>
            <person name="Sugawara M."/>
            <person name="Takahashi M."/>
            <person name="Kanda K."/>
            <person name="Yokoi T."/>
            <person name="Furuya T."/>
            <person name="Kikkawa E."/>
            <person name="Omura Y."/>
            <person name="Abe K."/>
            <person name="Kamihara K."/>
            <person name="Katsuta N."/>
            <person name="Sato K."/>
            <person name="Tanikawa M."/>
            <person name="Yamazaki M."/>
            <person name="Ninomiya K."/>
            <person name="Ishibashi T."/>
            <person name="Yamashita H."/>
            <person name="Murakawa K."/>
            <person name="Fujimori K."/>
            <person name="Tanai H."/>
            <person name="Kimata M."/>
            <person name="Watanabe M."/>
            <person name="Hiraoka S."/>
            <person name="Chiba Y."/>
            <person name="Ishida S."/>
            <person name="Ono Y."/>
            <person name="Takiguchi S."/>
            <person name="Watanabe S."/>
            <person name="Yosida M."/>
            <person name="Hotuta T."/>
            <person name="Kusano J."/>
            <person name="Kanehori K."/>
            <person name="Takahashi-Fujii A."/>
            <person name="Hara H."/>
            <person name="Tanase T.-O."/>
            <person name="Nomura Y."/>
            <person name="Togiya S."/>
            <person name="Komai F."/>
            <person name="Hara R."/>
            <person name="Takeuchi K."/>
            <person name="Arita M."/>
            <person name="Imose N."/>
            <person name="Musashino K."/>
            <person name="Yuuki H."/>
            <person name="Oshima A."/>
            <person name="Sasaki N."/>
            <person name="Aotsuka S."/>
            <person name="Yoshikawa Y."/>
            <person name="Matsunawa H."/>
            <person name="Ichihara T."/>
            <person name="Shiohata N."/>
            <person name="Sano S."/>
            <person name="Moriya S."/>
            <person name="Momiyama H."/>
            <person name="Satoh N."/>
            <person name="Takami S."/>
            <person name="Terashima Y."/>
            <person name="Suzuki O."/>
            <person name="Nakagawa S."/>
            <person name="Senoh A."/>
            <person name="Mizoguchi H."/>
            <person name="Goto Y."/>
            <person name="Shimizu F."/>
            <person name="Wakebe H."/>
            <person name="Hishigaki H."/>
            <person name="Watanabe T."/>
            <person name="Sugiyama A."/>
            <person name="Takemoto M."/>
            <person name="Kawakami B."/>
            <person name="Yamazaki M."/>
            <person name="Watanabe K."/>
            <person name="Kumagai A."/>
            <person name="Itakura S."/>
            <person name="Fukuzumi Y."/>
            <person name="Fujimori Y."/>
            <person name="Komiyama M."/>
            <person name="Tashiro H."/>
            <person name="Tanigami A."/>
            <person name="Fujiwara T."/>
            <person name="Ono T."/>
            <person name="Yamada K."/>
            <person name="Fujii Y."/>
            <person name="Ozaki K."/>
            <person name="Hirao M."/>
            <person name="Ohmori Y."/>
            <person name="Kawabata A."/>
            <person name="Hikiji T."/>
            <person name="Kobatake N."/>
            <person name="Inagaki H."/>
            <person name="Ikema Y."/>
            <person name="Okamoto S."/>
            <person name="Okitani R."/>
            <person name="Kawakami T."/>
            <person name="Noguchi S."/>
            <person name="Itoh T."/>
            <person name="Shigeta K."/>
            <person name="Senba T."/>
            <person name="Matsumura K."/>
            <person name="Nakajima Y."/>
            <person name="Mizuno T."/>
            <person name="Morinaga M."/>
            <person name="Sasaki M."/>
            <person name="Togashi T."/>
            <person name="Oyama M."/>
            <person name="Hata H."/>
            <person name="Watanabe M."/>
            <person name="Komatsu T."/>
            <person name="Mizushima-Sugano J."/>
            <person name="Satoh T."/>
            <person name="Shirai Y."/>
            <person name="Takahashi Y."/>
            <person name="Nakagawa K."/>
            <person name="Okumura K."/>
            <person name="Nagase T."/>
            <person name="Nomura N."/>
            <person name="Kikuchi H."/>
            <person name="Masuho Y."/>
            <person name="Yamashita R."/>
            <person name="Nakai K."/>
            <person name="Yada T."/>
            <person name="Nakamura Y."/>
            <person name="Ohara O."/>
            <person name="Isogai T."/>
            <person name="Sugano S."/>
        </authorList>
    </citation>
    <scope>NUCLEOTIDE SEQUENCE [LARGE SCALE MRNA] (ISOFORM 4)</scope>
</reference>
<reference key="3">
    <citation type="journal article" date="2005" name="Nature">
        <title>Generation and annotation of the DNA sequences of human chromosomes 2 and 4.</title>
        <authorList>
            <person name="Hillier L.W."/>
            <person name="Graves T.A."/>
            <person name="Fulton R.S."/>
            <person name="Fulton L.A."/>
            <person name="Pepin K.H."/>
            <person name="Minx P."/>
            <person name="Wagner-McPherson C."/>
            <person name="Layman D."/>
            <person name="Wylie K."/>
            <person name="Sekhon M."/>
            <person name="Becker M.C."/>
            <person name="Fewell G.A."/>
            <person name="Delehaunty K.D."/>
            <person name="Miner T.L."/>
            <person name="Nash W.E."/>
            <person name="Kremitzki C."/>
            <person name="Oddy L."/>
            <person name="Du H."/>
            <person name="Sun H."/>
            <person name="Bradshaw-Cordum H."/>
            <person name="Ali J."/>
            <person name="Carter J."/>
            <person name="Cordes M."/>
            <person name="Harris A."/>
            <person name="Isak A."/>
            <person name="van Brunt A."/>
            <person name="Nguyen C."/>
            <person name="Du F."/>
            <person name="Courtney L."/>
            <person name="Kalicki J."/>
            <person name="Ozersky P."/>
            <person name="Abbott S."/>
            <person name="Armstrong J."/>
            <person name="Belter E.A."/>
            <person name="Caruso L."/>
            <person name="Cedroni M."/>
            <person name="Cotton M."/>
            <person name="Davidson T."/>
            <person name="Desai A."/>
            <person name="Elliott G."/>
            <person name="Erb T."/>
            <person name="Fronick C."/>
            <person name="Gaige T."/>
            <person name="Haakenson W."/>
            <person name="Haglund K."/>
            <person name="Holmes A."/>
            <person name="Harkins R."/>
            <person name="Kim K."/>
            <person name="Kruchowski S.S."/>
            <person name="Strong C.M."/>
            <person name="Grewal N."/>
            <person name="Goyea E."/>
            <person name="Hou S."/>
            <person name="Levy A."/>
            <person name="Martinka S."/>
            <person name="Mead K."/>
            <person name="McLellan M.D."/>
            <person name="Meyer R."/>
            <person name="Randall-Maher J."/>
            <person name="Tomlinson C."/>
            <person name="Dauphin-Kohlberg S."/>
            <person name="Kozlowicz-Reilly A."/>
            <person name="Shah N."/>
            <person name="Swearengen-Shahid S."/>
            <person name="Snider J."/>
            <person name="Strong J.T."/>
            <person name="Thompson J."/>
            <person name="Yoakum M."/>
            <person name="Leonard S."/>
            <person name="Pearman C."/>
            <person name="Trani L."/>
            <person name="Radionenko M."/>
            <person name="Waligorski J.E."/>
            <person name="Wang C."/>
            <person name="Rock S.M."/>
            <person name="Tin-Wollam A.-M."/>
            <person name="Maupin R."/>
            <person name="Latreille P."/>
            <person name="Wendl M.C."/>
            <person name="Yang S.-P."/>
            <person name="Pohl C."/>
            <person name="Wallis J.W."/>
            <person name="Spieth J."/>
            <person name="Bieri T.A."/>
            <person name="Berkowicz N."/>
            <person name="Nelson J.O."/>
            <person name="Osborne J."/>
            <person name="Ding L."/>
            <person name="Meyer R."/>
            <person name="Sabo A."/>
            <person name="Shotland Y."/>
            <person name="Sinha P."/>
            <person name="Wohldmann P.E."/>
            <person name="Cook L.L."/>
            <person name="Hickenbotham M.T."/>
            <person name="Eldred J."/>
            <person name="Williams D."/>
            <person name="Jones T.A."/>
            <person name="She X."/>
            <person name="Ciccarelli F.D."/>
            <person name="Izaurralde E."/>
            <person name="Taylor J."/>
            <person name="Schmutz J."/>
            <person name="Myers R.M."/>
            <person name="Cox D.R."/>
            <person name="Huang X."/>
            <person name="McPherson J.D."/>
            <person name="Mardis E.R."/>
            <person name="Clifton S.W."/>
            <person name="Warren W.C."/>
            <person name="Chinwalla A.T."/>
            <person name="Eddy S.R."/>
            <person name="Marra M.A."/>
            <person name="Ovcharenko I."/>
            <person name="Furey T.S."/>
            <person name="Miller W."/>
            <person name="Eichler E.E."/>
            <person name="Bork P."/>
            <person name="Suyama M."/>
            <person name="Torrents D."/>
            <person name="Waterston R.H."/>
            <person name="Wilson R.K."/>
        </authorList>
    </citation>
    <scope>NUCLEOTIDE SEQUENCE [LARGE SCALE GENOMIC DNA]</scope>
</reference>
<reference key="4">
    <citation type="journal article" date="2004" name="Genome Res.">
        <title>The status, quality, and expansion of the NIH full-length cDNA project: the Mammalian Gene Collection (MGC).</title>
        <authorList>
            <consortium name="The MGC Project Team"/>
        </authorList>
    </citation>
    <scope>NUCLEOTIDE SEQUENCE [LARGE SCALE MRNA] (ISOFORMS 2 AND 3)</scope>
    <source>
        <tissue>Brain</tissue>
        <tissue>Lymph</tissue>
    </source>
</reference>
<reference key="5">
    <citation type="journal article" date="2014" name="Am. J. Hum. Genet.">
        <title>AP1S3 mutations are associated with pustular psoriasis and impaired Toll-like receptor 3 trafficking.</title>
        <authorList>
            <person name="Setta-Kaffetzi N."/>
            <person name="Simpson M.A."/>
            <person name="Navarini A.A."/>
            <person name="Patel V.M."/>
            <person name="Lu H.C."/>
            <person name="Allen M.H."/>
            <person name="Duckworth M."/>
            <person name="Bachelez H."/>
            <person name="Burden A.D."/>
            <person name="Choon S.E."/>
            <person name="Griffiths C.E."/>
            <person name="Kirby B."/>
            <person name="Kolios A."/>
            <person name="Seyger M.M."/>
            <person name="Prins C."/>
            <person name="Smahi A."/>
            <person name="Trembath R.C."/>
            <person name="Fraternali F."/>
            <person name="Smith C.H."/>
            <person name="Barker J.N."/>
            <person name="Capon F."/>
        </authorList>
    </citation>
    <scope>FUNCTION</scope>
    <scope>INVOLVEMENT IN PSORS15</scope>
    <scope>VARIANTS CYS-4; LYS-17; ALA-22; ILE-32; TRP-33; VAL-79; THR-83 AND GLU-124</scope>
    <scope>CHARACTERIZATION OF VARIANTS CYS-4 AND TRP-33</scope>
</reference>
<feature type="chain" id="PRO_0000193801" description="AP-1 complex subunit sigma-3">
    <location>
        <begin position="1"/>
        <end position="154"/>
    </location>
</feature>
<feature type="splice variant" id="VSP_015942" description="In isoform 3." evidence="3">
    <original>VCELDII</original>
    <variation>TWPFARA</variation>
    <location>
        <begin position="98"/>
        <end position="104"/>
    </location>
</feature>
<feature type="splice variant" id="VSP_015943" description="In isoform 3." evidence="3">
    <location>
        <begin position="105"/>
        <end position="154"/>
    </location>
</feature>
<feature type="splice variant" id="VSP_015944" description="In isoform 2." evidence="3">
    <original>VSTVSQTMGER</original>
    <variation>NRLSPRGRDCSEPRSCHCTLA</variation>
    <location>
        <begin position="144"/>
        <end position="154"/>
    </location>
</feature>
<feature type="splice variant" id="VSP_040384" description="In isoform 4." evidence="2">
    <original>VSTVSQTMGER</original>
    <variation>TMEEYMNKPTF</variation>
    <location>
        <begin position="144"/>
        <end position="154"/>
    </location>
</feature>
<feature type="sequence variant" id="VAR_072545" description="Risk factor for PSORS15; results in decreased protein levels; dbSNP:rs116107386." evidence="1">
    <original>F</original>
    <variation>C</variation>
    <location>
        <position position="4"/>
    </location>
</feature>
<feature type="sequence variant" id="VAR_072546" description="In dbSNP:rs750870128." evidence="1">
    <original>Q</original>
    <variation>K</variation>
    <location>
        <position position="17"/>
    </location>
</feature>
<feature type="sequence variant" id="VAR_072547" description="In dbSNP:rs149183052." evidence="1">
    <original>T</original>
    <variation>A</variation>
    <location>
        <position position="22"/>
    </location>
</feature>
<feature type="sequence variant" id="VAR_072548" description="In dbSNP:rs78536455." evidence="1">
    <original>T</original>
    <variation>I</variation>
    <location>
        <position position="32"/>
    </location>
</feature>
<feature type="sequence variant" id="VAR_072549" description="Risk factor for PSORS15; results in decreased TLR3 targeting to the endosomes indicating impaired function; dbSNP:rs138292988." evidence="1">
    <original>R</original>
    <variation>W</variation>
    <location>
        <position position="33"/>
    </location>
</feature>
<feature type="sequence variant" id="VAR_072550" description="In dbSNP:rs34353588." evidence="1">
    <original>L</original>
    <variation>V</variation>
    <location>
        <position position="79"/>
    </location>
</feature>
<feature type="sequence variant" id="VAR_072551" description="In dbSNP:rs202157374." evidence="1">
    <original>I</original>
    <variation>T</variation>
    <location>
        <position position="83"/>
    </location>
</feature>
<feature type="sequence variant" id="VAR_072552" evidence="1">
    <original>Q</original>
    <variation>E</variation>
    <location>
        <position position="124"/>
    </location>
</feature>
<feature type="strand" evidence="5">
    <location>
        <begin position="2"/>
        <end position="8"/>
    </location>
</feature>
<feature type="strand" evidence="5">
    <location>
        <begin position="14"/>
        <end position="21"/>
    </location>
</feature>
<feature type="helix" evidence="5">
    <location>
        <begin position="25"/>
        <end position="40"/>
    </location>
</feature>
<feature type="strand" evidence="5">
    <location>
        <begin position="44"/>
        <end position="46"/>
    </location>
</feature>
<feature type="strand" evidence="5">
    <location>
        <begin position="48"/>
        <end position="51"/>
    </location>
</feature>
<feature type="strand" evidence="5">
    <location>
        <begin position="56"/>
        <end position="61"/>
    </location>
</feature>
<feature type="strand" evidence="5">
    <location>
        <begin position="63"/>
        <end position="71"/>
    </location>
</feature>
<feature type="helix" evidence="5">
    <location>
        <begin position="77"/>
        <end position="95"/>
    </location>
</feature>
<feature type="helix" evidence="5">
    <location>
        <begin position="100"/>
        <end position="105"/>
    </location>
</feature>
<feature type="helix" evidence="5">
    <location>
        <begin position="107"/>
        <end position="117"/>
    </location>
</feature>
<feature type="strand" evidence="5">
    <location>
        <begin position="122"/>
        <end position="124"/>
    </location>
</feature>
<feature type="helix" evidence="5">
    <location>
        <begin position="129"/>
        <end position="141"/>
    </location>
</feature>
<protein>
    <recommendedName>
        <fullName>AP-1 complex subunit sigma-3</fullName>
    </recommendedName>
    <alternativeName>
        <fullName>Adaptor protein complex AP-1 subunit sigma-1C</fullName>
    </alternativeName>
    <alternativeName>
        <fullName>Adaptor-related protein complex 1 subunit sigma-1C</fullName>
    </alternativeName>
    <alternativeName>
        <fullName>Clathrin assembly protein complex 1 sigma-1C small chain</fullName>
    </alternativeName>
    <alternativeName>
        <fullName>Golgi adaptor HA1/AP1 adaptin sigma-1C subunit</fullName>
    </alternativeName>
    <alternativeName>
        <fullName>Sigma 1C subunit of AP-1 clathrin</fullName>
    </alternativeName>
    <alternativeName>
        <fullName>Sigma-adaptin 1C</fullName>
    </alternativeName>
    <alternativeName>
        <fullName>Sigma1C-adaptin</fullName>
    </alternativeName>
</protein>
<evidence type="ECO:0000269" key="1">
    <source>
    </source>
</evidence>
<evidence type="ECO:0000303" key="2">
    <source>
    </source>
</evidence>
<evidence type="ECO:0000303" key="3">
    <source>
    </source>
</evidence>
<evidence type="ECO:0000305" key="4"/>
<evidence type="ECO:0007829" key="5">
    <source>
        <dbReference type="PDB" id="7R4H"/>
    </source>
</evidence>
<proteinExistence type="evidence at protein level"/>
<dbReference type="EMBL" id="AF393369">
    <property type="protein sequence ID" value="AAL09586.1"/>
    <property type="molecule type" value="mRNA"/>
</dbReference>
<dbReference type="EMBL" id="AK299026">
    <property type="protein sequence ID" value="BAG61103.1"/>
    <property type="molecule type" value="mRNA"/>
</dbReference>
<dbReference type="EMBL" id="AC012512">
    <property type="status" value="NOT_ANNOTATED_CDS"/>
    <property type="molecule type" value="Genomic_DNA"/>
</dbReference>
<dbReference type="EMBL" id="AC093884">
    <property type="status" value="NOT_ANNOTATED_CDS"/>
    <property type="molecule type" value="Genomic_DNA"/>
</dbReference>
<dbReference type="EMBL" id="BC009606">
    <property type="protein sequence ID" value="AAH09606.1"/>
    <property type="molecule type" value="mRNA"/>
</dbReference>
<dbReference type="EMBL" id="BC021898">
    <property type="protein sequence ID" value="AAH21898.1"/>
    <property type="molecule type" value="mRNA"/>
</dbReference>
<dbReference type="CCDS" id="CCDS42827.1">
    <molecule id="Q96PC3-4"/>
</dbReference>
<dbReference type="RefSeq" id="NP_001034658.1">
    <molecule id="Q96PC3-4"/>
    <property type="nucleotide sequence ID" value="NM_001039569.2"/>
</dbReference>
<dbReference type="PDB" id="4HMY">
    <property type="method" value="X-ray"/>
    <property type="resolution" value="7.00 A"/>
    <property type="chains" value="S=1-154"/>
</dbReference>
<dbReference type="PDB" id="6CM9">
    <property type="method" value="EM"/>
    <property type="resolution" value="3.73 A"/>
    <property type="chains" value="S=1-154"/>
</dbReference>
<dbReference type="PDB" id="6CRI">
    <property type="method" value="EM"/>
    <property type="resolution" value="6.80 A"/>
    <property type="chains" value="S/a/b=1-142"/>
</dbReference>
<dbReference type="PDB" id="6D83">
    <property type="method" value="EM"/>
    <property type="resolution" value="4.27 A"/>
    <property type="chains" value="S=1-154"/>
</dbReference>
<dbReference type="PDB" id="6D84">
    <property type="method" value="EM"/>
    <property type="resolution" value="6.72 A"/>
    <property type="chains" value="Q/S=1-154"/>
</dbReference>
<dbReference type="PDB" id="6DFF">
    <property type="method" value="EM"/>
    <property type="resolution" value="3.90 A"/>
    <property type="chains" value="S=1-154"/>
</dbReference>
<dbReference type="PDB" id="7R4H">
    <property type="method" value="EM"/>
    <property type="resolution" value="2.34 A"/>
    <property type="chains" value="S=1-154"/>
</dbReference>
<dbReference type="PDB" id="7UX3">
    <property type="method" value="EM"/>
    <property type="resolution" value="9.60 A"/>
    <property type="chains" value="S=1-154"/>
</dbReference>
<dbReference type="PDB" id="8D4C">
    <property type="method" value="EM"/>
    <property type="resolution" value="9.30 A"/>
    <property type="chains" value="O/S=1-154"/>
</dbReference>
<dbReference type="PDB" id="8D4D">
    <property type="method" value="EM"/>
    <property type="resolution" value="9.60 A"/>
    <property type="chains" value="O/S=1-154"/>
</dbReference>
<dbReference type="PDB" id="8D4E">
    <property type="method" value="EM"/>
    <property type="resolution" value="9.20 A"/>
    <property type="chains" value="S=1-154"/>
</dbReference>
<dbReference type="PDB" id="8D4F">
    <property type="method" value="EM"/>
    <property type="resolution" value="9.80 A"/>
    <property type="chains" value="O/S=1-154"/>
</dbReference>
<dbReference type="PDB" id="8D4G">
    <property type="method" value="EM"/>
    <property type="resolution" value="11.60 A"/>
    <property type="chains" value="O/S=1-154"/>
</dbReference>
<dbReference type="PDB" id="8D9R">
    <property type="method" value="EM"/>
    <property type="resolution" value="20.00 A"/>
    <property type="chains" value="S/t/u/v/w/x=1-154"/>
</dbReference>
<dbReference type="PDB" id="8D9S">
    <property type="method" value="EM"/>
    <property type="resolution" value="20.00 A"/>
    <property type="chains" value="S/t/u/v/w/x=1-154"/>
</dbReference>
<dbReference type="PDB" id="8D9T">
    <property type="method" value="EM"/>
    <property type="resolution" value="20.00 A"/>
    <property type="chains" value="S/s/t/u/v/w=1-154"/>
</dbReference>
<dbReference type="PDB" id="8D9U">
    <property type="method" value="EM"/>
    <property type="resolution" value="20.00 A"/>
    <property type="chains" value="S/s/t/u/v/w=1-154"/>
</dbReference>
<dbReference type="PDB" id="8D9V">
    <property type="method" value="EM"/>
    <property type="resolution" value="9.40 A"/>
    <property type="chains" value="O/S=1-154"/>
</dbReference>
<dbReference type="PDB" id="8D9W">
    <property type="method" value="EM"/>
    <property type="resolution" value="9.30 A"/>
    <property type="chains" value="e/f=1-154"/>
</dbReference>
<dbReference type="PDBsum" id="4HMY"/>
<dbReference type="PDBsum" id="6CM9"/>
<dbReference type="PDBsum" id="6CRI"/>
<dbReference type="PDBsum" id="6D83"/>
<dbReference type="PDBsum" id="6D84"/>
<dbReference type="PDBsum" id="6DFF"/>
<dbReference type="PDBsum" id="7R4H"/>
<dbReference type="PDBsum" id="7UX3"/>
<dbReference type="PDBsum" id="8D4C"/>
<dbReference type="PDBsum" id="8D4D"/>
<dbReference type="PDBsum" id="8D4E"/>
<dbReference type="PDBsum" id="8D4F"/>
<dbReference type="PDBsum" id="8D4G"/>
<dbReference type="PDBsum" id="8D9R"/>
<dbReference type="PDBsum" id="8D9S"/>
<dbReference type="PDBsum" id="8D9T"/>
<dbReference type="PDBsum" id="8D9U"/>
<dbReference type="PDBsum" id="8D9V"/>
<dbReference type="PDBsum" id="8D9W"/>
<dbReference type="EMDB" id="EMD-14312"/>
<dbReference type="EMDB" id="EMD-26853"/>
<dbReference type="EMDB" id="EMD-27181"/>
<dbReference type="EMDB" id="EMD-27182"/>
<dbReference type="EMDB" id="EMD-27183"/>
<dbReference type="EMDB" id="EMD-27184"/>
<dbReference type="EMDB" id="EMD-27185"/>
<dbReference type="EMDB" id="EMD-7563"/>
<dbReference type="SMR" id="Q96PC3"/>
<dbReference type="BioGRID" id="126229">
    <property type="interactions" value="22"/>
</dbReference>
<dbReference type="ComplexPortal" id="CPX-5049">
    <property type="entry name" value="Ubiquitous AP-1 Adaptor complex, sigma1c variant"/>
</dbReference>
<dbReference type="CORUM" id="Q96PC3"/>
<dbReference type="FunCoup" id="Q96PC3">
    <property type="interactions" value="751"/>
</dbReference>
<dbReference type="IntAct" id="Q96PC3">
    <property type="interactions" value="18"/>
</dbReference>
<dbReference type="STRING" id="9606.ENSP00000379891"/>
<dbReference type="iPTMnet" id="Q96PC3"/>
<dbReference type="PhosphoSitePlus" id="Q96PC3"/>
<dbReference type="BioMuta" id="AP1S3"/>
<dbReference type="DMDM" id="21541959"/>
<dbReference type="jPOST" id="Q96PC3"/>
<dbReference type="MassIVE" id="Q96PC3"/>
<dbReference type="PaxDb" id="9606-ENSP00000379891"/>
<dbReference type="PeptideAtlas" id="Q96PC3"/>
<dbReference type="ProteomicsDB" id="77660">
    <molecule id="Q96PC3-1"/>
</dbReference>
<dbReference type="ProteomicsDB" id="77661">
    <molecule id="Q96PC3-2"/>
</dbReference>
<dbReference type="ProteomicsDB" id="77662">
    <molecule id="Q96PC3-3"/>
</dbReference>
<dbReference type="ProteomicsDB" id="77663">
    <molecule id="Q96PC3-4"/>
</dbReference>
<dbReference type="Pumba" id="Q96PC3"/>
<dbReference type="Antibodypedia" id="54195">
    <property type="antibodies" value="101 antibodies from 14 providers"/>
</dbReference>
<dbReference type="DNASU" id="130340"/>
<dbReference type="Ensembl" id="ENST00000396654.7">
    <molecule id="Q96PC3-4"/>
    <property type="protein sequence ID" value="ENSP00000379891.2"/>
    <property type="gene ID" value="ENSG00000152056.18"/>
</dbReference>
<dbReference type="Ensembl" id="ENST00000415298.5">
    <molecule id="Q96PC3-3"/>
    <property type="protein sequence ID" value="ENSP00000401705.1"/>
    <property type="gene ID" value="ENSG00000152056.18"/>
</dbReference>
<dbReference type="Ensembl" id="ENST00000443700.5">
    <molecule id="Q96PC3-2"/>
    <property type="protein sequence ID" value="ENSP00000397155.1"/>
    <property type="gene ID" value="ENSG00000152056.18"/>
</dbReference>
<dbReference type="Ensembl" id="ENST00000446015.6">
    <molecule id="Q96PC3-1"/>
    <property type="protein sequence ID" value="ENSP00000388738.2"/>
    <property type="gene ID" value="ENSG00000152056.18"/>
</dbReference>
<dbReference type="GeneID" id="130340"/>
<dbReference type="KEGG" id="hsa:130340"/>
<dbReference type="MANE-Select" id="ENST00000396654.7">
    <molecule id="Q96PC3-4"/>
    <property type="protein sequence ID" value="ENSP00000379891.2"/>
    <property type="RefSeq nucleotide sequence ID" value="NM_001039569.2"/>
    <property type="RefSeq protein sequence ID" value="NP_001034658.1"/>
</dbReference>
<dbReference type="UCSC" id="uc002vnn.4">
    <molecule id="Q96PC3-1"/>
    <property type="organism name" value="human"/>
</dbReference>
<dbReference type="AGR" id="HGNC:18971"/>
<dbReference type="CTD" id="130340"/>
<dbReference type="DisGeNET" id="130340"/>
<dbReference type="GeneCards" id="AP1S3"/>
<dbReference type="HGNC" id="HGNC:18971">
    <property type="gene designation" value="AP1S3"/>
</dbReference>
<dbReference type="HPA" id="ENSG00000152056">
    <property type="expression patterns" value="Tissue enhanced (epididymis)"/>
</dbReference>
<dbReference type="MalaCards" id="AP1S3"/>
<dbReference type="MIM" id="615781">
    <property type="type" value="gene"/>
</dbReference>
<dbReference type="MIM" id="616106">
    <property type="type" value="phenotype"/>
</dbReference>
<dbReference type="neXtProt" id="NX_Q96PC3"/>
<dbReference type="OpenTargets" id="ENSG00000152056"/>
<dbReference type="Orphanet" id="163931">
    <property type="disease" value="Acrodermatitis continua of Hallopeau"/>
</dbReference>
<dbReference type="Orphanet" id="247353">
    <property type="disease" value="Generalized pustular psoriasis"/>
</dbReference>
<dbReference type="Orphanet" id="163927">
    <property type="disease" value="Pustulosis palmaris et plantaris"/>
</dbReference>
<dbReference type="VEuPathDB" id="HostDB:ENSG00000152056"/>
<dbReference type="eggNOG" id="KOG0934">
    <property type="taxonomic scope" value="Eukaryota"/>
</dbReference>
<dbReference type="GeneTree" id="ENSGT00970000193372"/>
<dbReference type="HOGENOM" id="CLU_061221_4_1_1"/>
<dbReference type="InParanoid" id="Q96PC3"/>
<dbReference type="OMA" id="ETMAEYM"/>
<dbReference type="OrthoDB" id="371463at2759"/>
<dbReference type="PAN-GO" id="Q96PC3">
    <property type="GO annotations" value="2 GO annotations based on evolutionary models"/>
</dbReference>
<dbReference type="PhylomeDB" id="Q96PC3"/>
<dbReference type="TreeFam" id="TF312921"/>
<dbReference type="PathwayCommons" id="Q96PC3"/>
<dbReference type="Reactome" id="R-HSA-164940">
    <property type="pathway name" value="Nef mediated downregulation of MHC class I complex cell surface expression"/>
</dbReference>
<dbReference type="Reactome" id="R-HSA-2132295">
    <property type="pathway name" value="MHC class II antigen presentation"/>
</dbReference>
<dbReference type="Reactome" id="R-HSA-432720">
    <property type="pathway name" value="Lysosome Vesicle Biogenesis"/>
</dbReference>
<dbReference type="Reactome" id="R-HSA-432722">
    <property type="pathway name" value="Golgi Associated Vesicle Biogenesis"/>
</dbReference>
<dbReference type="SignaLink" id="Q96PC3"/>
<dbReference type="BioGRID-ORCS" id="130340">
    <property type="hits" value="16 hits in 1157 CRISPR screens"/>
</dbReference>
<dbReference type="ChiTaRS" id="AP1S3">
    <property type="organism name" value="human"/>
</dbReference>
<dbReference type="EvolutionaryTrace" id="Q96PC3"/>
<dbReference type="GenomeRNAi" id="130340"/>
<dbReference type="Pharos" id="Q96PC3">
    <property type="development level" value="Tbio"/>
</dbReference>
<dbReference type="PRO" id="PR:Q96PC3"/>
<dbReference type="Proteomes" id="UP000005640">
    <property type="component" value="Chromosome 2"/>
</dbReference>
<dbReference type="RNAct" id="Q96PC3">
    <property type="molecule type" value="protein"/>
</dbReference>
<dbReference type="Bgee" id="ENSG00000152056">
    <property type="expression patterns" value="Expressed in islet of Langerhans and 106 other cell types or tissues"/>
</dbReference>
<dbReference type="ExpressionAtlas" id="Q96PC3">
    <property type="expression patterns" value="baseline and differential"/>
</dbReference>
<dbReference type="GO" id="GO:0030121">
    <property type="term" value="C:AP-1 adaptor complex"/>
    <property type="evidence" value="ECO:0000303"/>
    <property type="project" value="ComplexPortal"/>
</dbReference>
<dbReference type="GO" id="GO:0005905">
    <property type="term" value="C:clathrin-coated pit"/>
    <property type="evidence" value="ECO:0007669"/>
    <property type="project" value="UniProtKB-SubCell"/>
</dbReference>
<dbReference type="GO" id="GO:0030659">
    <property type="term" value="C:cytoplasmic vesicle membrane"/>
    <property type="evidence" value="ECO:0000304"/>
    <property type="project" value="Reactome"/>
</dbReference>
<dbReference type="GO" id="GO:0005829">
    <property type="term" value="C:cytosol"/>
    <property type="evidence" value="ECO:0000304"/>
    <property type="project" value="Reactome"/>
</dbReference>
<dbReference type="GO" id="GO:0005769">
    <property type="term" value="C:early endosome"/>
    <property type="evidence" value="ECO:0000303"/>
    <property type="project" value="ComplexPortal"/>
</dbReference>
<dbReference type="GO" id="GO:0000139">
    <property type="term" value="C:Golgi membrane"/>
    <property type="evidence" value="ECO:0000304"/>
    <property type="project" value="Reactome"/>
</dbReference>
<dbReference type="GO" id="GO:0043231">
    <property type="term" value="C:intracellular membrane-bounded organelle"/>
    <property type="evidence" value="ECO:0000314"/>
    <property type="project" value="HPA"/>
</dbReference>
<dbReference type="GO" id="GO:0005765">
    <property type="term" value="C:lysosomal membrane"/>
    <property type="evidence" value="ECO:0000304"/>
    <property type="project" value="Reactome"/>
</dbReference>
<dbReference type="GO" id="GO:0032588">
    <property type="term" value="C:trans-Golgi network membrane"/>
    <property type="evidence" value="ECO:0000304"/>
    <property type="project" value="Reactome"/>
</dbReference>
<dbReference type="GO" id="GO:0035615">
    <property type="term" value="F:clathrin adaptor activity"/>
    <property type="evidence" value="ECO:0007669"/>
    <property type="project" value="InterPro"/>
</dbReference>
<dbReference type="GO" id="GO:0006886">
    <property type="term" value="P:intracellular protein transport"/>
    <property type="evidence" value="ECO:0007669"/>
    <property type="project" value="InterPro"/>
</dbReference>
<dbReference type="GO" id="GO:1903232">
    <property type="term" value="P:melanosome assembly"/>
    <property type="evidence" value="ECO:0000303"/>
    <property type="project" value="ComplexPortal"/>
</dbReference>
<dbReference type="GO" id="GO:0060155">
    <property type="term" value="P:platelet dense granule organization"/>
    <property type="evidence" value="ECO:0000303"/>
    <property type="project" value="ComplexPortal"/>
</dbReference>
<dbReference type="GO" id="GO:0006605">
    <property type="term" value="P:protein targeting"/>
    <property type="evidence" value="ECO:0000315"/>
    <property type="project" value="UniProtKB"/>
</dbReference>
<dbReference type="GO" id="GO:0016192">
    <property type="term" value="P:vesicle-mediated transport"/>
    <property type="evidence" value="ECO:0000318"/>
    <property type="project" value="GO_Central"/>
</dbReference>
<dbReference type="CDD" id="cd14831">
    <property type="entry name" value="AP1_sigma"/>
    <property type="match status" value="1"/>
</dbReference>
<dbReference type="FunFam" id="3.30.450.60:FF:000005">
    <property type="entry name" value="AP complex subunit sigma"/>
    <property type="match status" value="1"/>
</dbReference>
<dbReference type="Gene3D" id="3.30.450.60">
    <property type="match status" value="1"/>
</dbReference>
<dbReference type="InterPro" id="IPR044733">
    <property type="entry name" value="AP1_sigma"/>
</dbReference>
<dbReference type="InterPro" id="IPR016635">
    <property type="entry name" value="AP_complex_ssu"/>
</dbReference>
<dbReference type="InterPro" id="IPR022775">
    <property type="entry name" value="AP_mu_sigma_su"/>
</dbReference>
<dbReference type="InterPro" id="IPR000804">
    <property type="entry name" value="Clathrin_sm-chain_CS"/>
</dbReference>
<dbReference type="InterPro" id="IPR011012">
    <property type="entry name" value="Longin-like_dom_sf"/>
</dbReference>
<dbReference type="PANTHER" id="PTHR11753">
    <property type="entry name" value="ADAPTOR COMPLEXES SMALL SUBUNIT FAMILY"/>
    <property type="match status" value="1"/>
</dbReference>
<dbReference type="Pfam" id="PF01217">
    <property type="entry name" value="Clat_adaptor_s"/>
    <property type="match status" value="1"/>
</dbReference>
<dbReference type="PIRSF" id="PIRSF015588">
    <property type="entry name" value="AP_complex_sigma"/>
    <property type="match status" value="1"/>
</dbReference>
<dbReference type="SUPFAM" id="SSF64356">
    <property type="entry name" value="SNARE-like"/>
    <property type="match status" value="1"/>
</dbReference>
<dbReference type="PROSITE" id="PS00989">
    <property type="entry name" value="CLAT_ADAPTOR_S"/>
    <property type="match status" value="1"/>
</dbReference>
<organism>
    <name type="scientific">Homo sapiens</name>
    <name type="common">Human</name>
    <dbReference type="NCBI Taxonomy" id="9606"/>
    <lineage>
        <taxon>Eukaryota</taxon>
        <taxon>Metazoa</taxon>
        <taxon>Chordata</taxon>
        <taxon>Craniata</taxon>
        <taxon>Vertebrata</taxon>
        <taxon>Euteleostomi</taxon>
        <taxon>Mammalia</taxon>
        <taxon>Eutheria</taxon>
        <taxon>Euarchontoglires</taxon>
        <taxon>Primates</taxon>
        <taxon>Haplorrhini</taxon>
        <taxon>Catarrhini</taxon>
        <taxon>Hominidae</taxon>
        <taxon>Homo</taxon>
    </lineage>
</organism>